<accession>Q8P475</accession>
<proteinExistence type="inferred from homology"/>
<gene>
    <name evidence="1" type="primary">tyrS</name>
    <name type="ordered locus">XCC3842</name>
</gene>
<organism>
    <name type="scientific">Xanthomonas campestris pv. campestris (strain ATCC 33913 / DSM 3586 / NCPPB 528 / LMG 568 / P 25)</name>
    <dbReference type="NCBI Taxonomy" id="190485"/>
    <lineage>
        <taxon>Bacteria</taxon>
        <taxon>Pseudomonadati</taxon>
        <taxon>Pseudomonadota</taxon>
        <taxon>Gammaproteobacteria</taxon>
        <taxon>Lysobacterales</taxon>
        <taxon>Lysobacteraceae</taxon>
        <taxon>Xanthomonas</taxon>
    </lineage>
</organism>
<feature type="chain" id="PRO_0000236782" description="Tyrosine--tRNA ligase">
    <location>
        <begin position="1"/>
        <end position="403"/>
    </location>
</feature>
<feature type="domain" description="S4 RNA-binding" evidence="1">
    <location>
        <begin position="339"/>
        <end position="400"/>
    </location>
</feature>
<feature type="short sequence motif" description="'HIGH' region">
    <location>
        <begin position="42"/>
        <end position="51"/>
    </location>
</feature>
<feature type="short sequence motif" description="'KMSKS' region">
    <location>
        <begin position="226"/>
        <end position="230"/>
    </location>
</feature>
<feature type="binding site" evidence="1">
    <location>
        <position position="229"/>
    </location>
    <ligand>
        <name>ATP</name>
        <dbReference type="ChEBI" id="CHEBI:30616"/>
    </ligand>
</feature>
<reference key="1">
    <citation type="journal article" date="2002" name="Nature">
        <title>Comparison of the genomes of two Xanthomonas pathogens with differing host specificities.</title>
        <authorList>
            <person name="da Silva A.C.R."/>
            <person name="Ferro J.A."/>
            <person name="Reinach F.C."/>
            <person name="Farah C.S."/>
            <person name="Furlan L.R."/>
            <person name="Quaggio R.B."/>
            <person name="Monteiro-Vitorello C.B."/>
            <person name="Van Sluys M.A."/>
            <person name="Almeida N.F. Jr."/>
            <person name="Alves L.M.C."/>
            <person name="do Amaral A.M."/>
            <person name="Bertolini M.C."/>
            <person name="Camargo L.E.A."/>
            <person name="Camarotte G."/>
            <person name="Cannavan F."/>
            <person name="Cardozo J."/>
            <person name="Chambergo F."/>
            <person name="Ciapina L.P."/>
            <person name="Cicarelli R.M.B."/>
            <person name="Coutinho L.L."/>
            <person name="Cursino-Santos J.R."/>
            <person name="El-Dorry H."/>
            <person name="Faria J.B."/>
            <person name="Ferreira A.J.S."/>
            <person name="Ferreira R.C.C."/>
            <person name="Ferro M.I.T."/>
            <person name="Formighieri E.F."/>
            <person name="Franco M.C."/>
            <person name="Greggio C.C."/>
            <person name="Gruber A."/>
            <person name="Katsuyama A.M."/>
            <person name="Kishi L.T."/>
            <person name="Leite R.P."/>
            <person name="Lemos E.G.M."/>
            <person name="Lemos M.V.F."/>
            <person name="Locali E.C."/>
            <person name="Machado M.A."/>
            <person name="Madeira A.M.B.N."/>
            <person name="Martinez-Rossi N.M."/>
            <person name="Martins E.C."/>
            <person name="Meidanis J."/>
            <person name="Menck C.F.M."/>
            <person name="Miyaki C.Y."/>
            <person name="Moon D.H."/>
            <person name="Moreira L.M."/>
            <person name="Novo M.T.M."/>
            <person name="Okura V.K."/>
            <person name="Oliveira M.C."/>
            <person name="Oliveira V.R."/>
            <person name="Pereira H.A."/>
            <person name="Rossi A."/>
            <person name="Sena J.A.D."/>
            <person name="Silva C."/>
            <person name="de Souza R.F."/>
            <person name="Spinola L.A.F."/>
            <person name="Takita M.A."/>
            <person name="Tamura R.E."/>
            <person name="Teixeira E.C."/>
            <person name="Tezza R.I.D."/>
            <person name="Trindade dos Santos M."/>
            <person name="Truffi D."/>
            <person name="Tsai S.M."/>
            <person name="White F.F."/>
            <person name="Setubal J.C."/>
            <person name="Kitajima J.P."/>
        </authorList>
    </citation>
    <scope>NUCLEOTIDE SEQUENCE [LARGE SCALE GENOMIC DNA]</scope>
    <source>
        <strain>ATCC 33913 / DSM 3586 / NCPPB 528 / LMG 568 / P 25</strain>
    </source>
</reference>
<comment type="function">
    <text evidence="1">Catalyzes the attachment of tyrosine to tRNA(Tyr) in a two-step reaction: tyrosine is first activated by ATP to form Tyr-AMP and then transferred to the acceptor end of tRNA(Tyr).</text>
</comment>
<comment type="catalytic activity">
    <reaction evidence="1">
        <text>tRNA(Tyr) + L-tyrosine + ATP = L-tyrosyl-tRNA(Tyr) + AMP + diphosphate + H(+)</text>
        <dbReference type="Rhea" id="RHEA:10220"/>
        <dbReference type="Rhea" id="RHEA-COMP:9706"/>
        <dbReference type="Rhea" id="RHEA-COMP:9707"/>
        <dbReference type="ChEBI" id="CHEBI:15378"/>
        <dbReference type="ChEBI" id="CHEBI:30616"/>
        <dbReference type="ChEBI" id="CHEBI:33019"/>
        <dbReference type="ChEBI" id="CHEBI:58315"/>
        <dbReference type="ChEBI" id="CHEBI:78442"/>
        <dbReference type="ChEBI" id="CHEBI:78536"/>
        <dbReference type="ChEBI" id="CHEBI:456215"/>
        <dbReference type="EC" id="6.1.1.1"/>
    </reaction>
</comment>
<comment type="subunit">
    <text evidence="1">Homodimer.</text>
</comment>
<comment type="subcellular location">
    <subcellularLocation>
        <location evidence="1">Cytoplasm</location>
    </subcellularLocation>
</comment>
<comment type="similarity">
    <text evidence="1">Belongs to the class-I aminoacyl-tRNA synthetase family. TyrS type 2 subfamily.</text>
</comment>
<name>SYY_XANCP</name>
<sequence>MATIDESLALIGRGAEEILKLEQLEARLTSGVPLRVKAGFDPTAPDLHLGHTVLLNKMRQFQELGHQVIFLIGDFTGMIGDPSGKNVTRKPLSREDVLANARTYEEQVFKILDRTRTEVRFNSEWFGQMSAADMIKLSAQHTVARMLERDDFAKRFAGQQPIAIHEFLYPLVQGYDSVALKADVELGGTDQTFNLLMGRGLQEHYGQAPQVVLTMPLLEGLDGVAKMSKSLGNYIGINEPAIDIVTKTMKIGDTLTWRWIDLLSFDISVAEAARFKEDVAAGNLHPRDVKLRLARELATRFHDAATAEQAIAGWHAVVTGQGDTSVLPLQQVSVPAEGLRIASLLTAAGLTPSNSEATRKLKERAVKIDGEVVDDLARQFGPGFEGVIQVGKRNFARVALVTS</sequence>
<evidence type="ECO:0000255" key="1">
    <source>
        <dbReference type="HAMAP-Rule" id="MF_02007"/>
    </source>
</evidence>
<protein>
    <recommendedName>
        <fullName evidence="1">Tyrosine--tRNA ligase</fullName>
        <ecNumber evidence="1">6.1.1.1</ecNumber>
    </recommendedName>
    <alternativeName>
        <fullName evidence="1">Tyrosyl-tRNA synthetase</fullName>
        <shortName evidence="1">TyrRS</shortName>
    </alternativeName>
</protein>
<dbReference type="EC" id="6.1.1.1" evidence="1"/>
<dbReference type="EMBL" id="AE008922">
    <property type="protein sequence ID" value="AAM43072.1"/>
    <property type="molecule type" value="Genomic_DNA"/>
</dbReference>
<dbReference type="RefSeq" id="NP_639181.1">
    <property type="nucleotide sequence ID" value="NC_003902.1"/>
</dbReference>
<dbReference type="RefSeq" id="WP_011038916.1">
    <property type="nucleotide sequence ID" value="NC_003902.1"/>
</dbReference>
<dbReference type="SMR" id="Q8P475"/>
<dbReference type="STRING" id="190485.XCC3841"/>
<dbReference type="EnsemblBacteria" id="AAM43072">
    <property type="protein sequence ID" value="AAM43072"/>
    <property type="gene ID" value="XCC3841"/>
</dbReference>
<dbReference type="KEGG" id="xcc:XCC3841"/>
<dbReference type="PATRIC" id="fig|190485.4.peg.4108"/>
<dbReference type="eggNOG" id="COG0162">
    <property type="taxonomic scope" value="Bacteria"/>
</dbReference>
<dbReference type="HOGENOM" id="CLU_024003_5_0_6"/>
<dbReference type="OrthoDB" id="9804243at2"/>
<dbReference type="Proteomes" id="UP000001010">
    <property type="component" value="Chromosome"/>
</dbReference>
<dbReference type="GO" id="GO:0005829">
    <property type="term" value="C:cytosol"/>
    <property type="evidence" value="ECO:0000318"/>
    <property type="project" value="GO_Central"/>
</dbReference>
<dbReference type="GO" id="GO:0005524">
    <property type="term" value="F:ATP binding"/>
    <property type="evidence" value="ECO:0007669"/>
    <property type="project" value="UniProtKB-UniRule"/>
</dbReference>
<dbReference type="GO" id="GO:0003723">
    <property type="term" value="F:RNA binding"/>
    <property type="evidence" value="ECO:0007669"/>
    <property type="project" value="UniProtKB-KW"/>
</dbReference>
<dbReference type="GO" id="GO:0004831">
    <property type="term" value="F:tyrosine-tRNA ligase activity"/>
    <property type="evidence" value="ECO:0000318"/>
    <property type="project" value="GO_Central"/>
</dbReference>
<dbReference type="GO" id="GO:0043039">
    <property type="term" value="P:tRNA aminoacylation"/>
    <property type="evidence" value="ECO:0000318"/>
    <property type="project" value="GO_Central"/>
</dbReference>
<dbReference type="GO" id="GO:0006437">
    <property type="term" value="P:tyrosyl-tRNA aminoacylation"/>
    <property type="evidence" value="ECO:0007669"/>
    <property type="project" value="UniProtKB-UniRule"/>
</dbReference>
<dbReference type="CDD" id="cd00165">
    <property type="entry name" value="S4"/>
    <property type="match status" value="1"/>
</dbReference>
<dbReference type="CDD" id="cd00805">
    <property type="entry name" value="TyrRS_core"/>
    <property type="match status" value="1"/>
</dbReference>
<dbReference type="FunFam" id="3.10.290.10:FF:000022">
    <property type="entry name" value="Tyrosine--tRNA ligase"/>
    <property type="match status" value="1"/>
</dbReference>
<dbReference type="FunFam" id="3.40.50.620:FF:000061">
    <property type="entry name" value="Tyrosine--tRNA ligase"/>
    <property type="match status" value="1"/>
</dbReference>
<dbReference type="Gene3D" id="3.40.50.620">
    <property type="entry name" value="HUPs"/>
    <property type="match status" value="1"/>
</dbReference>
<dbReference type="Gene3D" id="3.10.290.10">
    <property type="entry name" value="RNA-binding S4 domain"/>
    <property type="match status" value="1"/>
</dbReference>
<dbReference type="Gene3D" id="1.10.240.10">
    <property type="entry name" value="Tyrosyl-Transfer RNA Synthetase"/>
    <property type="match status" value="1"/>
</dbReference>
<dbReference type="HAMAP" id="MF_02007">
    <property type="entry name" value="Tyr_tRNA_synth_type2"/>
    <property type="match status" value="1"/>
</dbReference>
<dbReference type="InterPro" id="IPR001412">
    <property type="entry name" value="aa-tRNA-synth_I_CS"/>
</dbReference>
<dbReference type="InterPro" id="IPR002305">
    <property type="entry name" value="aa-tRNA-synth_Ic"/>
</dbReference>
<dbReference type="InterPro" id="IPR014729">
    <property type="entry name" value="Rossmann-like_a/b/a_fold"/>
</dbReference>
<dbReference type="InterPro" id="IPR002942">
    <property type="entry name" value="S4_RNA-bd"/>
</dbReference>
<dbReference type="InterPro" id="IPR036986">
    <property type="entry name" value="S4_RNA-bd_sf"/>
</dbReference>
<dbReference type="InterPro" id="IPR002307">
    <property type="entry name" value="Tyr-tRNA-ligase"/>
</dbReference>
<dbReference type="InterPro" id="IPR024088">
    <property type="entry name" value="Tyr-tRNA-ligase_bac-type"/>
</dbReference>
<dbReference type="InterPro" id="IPR024108">
    <property type="entry name" value="Tyr-tRNA-ligase_bac_2"/>
</dbReference>
<dbReference type="NCBIfam" id="TIGR00234">
    <property type="entry name" value="tyrS"/>
    <property type="match status" value="1"/>
</dbReference>
<dbReference type="PANTHER" id="PTHR11766:SF1">
    <property type="entry name" value="TYROSINE--TRNA LIGASE"/>
    <property type="match status" value="1"/>
</dbReference>
<dbReference type="PANTHER" id="PTHR11766">
    <property type="entry name" value="TYROSYL-TRNA SYNTHETASE"/>
    <property type="match status" value="1"/>
</dbReference>
<dbReference type="Pfam" id="PF00579">
    <property type="entry name" value="tRNA-synt_1b"/>
    <property type="match status" value="1"/>
</dbReference>
<dbReference type="PRINTS" id="PR01040">
    <property type="entry name" value="TRNASYNTHTYR"/>
</dbReference>
<dbReference type="SMART" id="SM00363">
    <property type="entry name" value="S4"/>
    <property type="match status" value="1"/>
</dbReference>
<dbReference type="SUPFAM" id="SSF55174">
    <property type="entry name" value="Alpha-L RNA-binding motif"/>
    <property type="match status" value="1"/>
</dbReference>
<dbReference type="SUPFAM" id="SSF52374">
    <property type="entry name" value="Nucleotidylyl transferase"/>
    <property type="match status" value="1"/>
</dbReference>
<dbReference type="PROSITE" id="PS00178">
    <property type="entry name" value="AA_TRNA_LIGASE_I"/>
    <property type="match status" value="1"/>
</dbReference>
<dbReference type="PROSITE" id="PS50889">
    <property type="entry name" value="S4"/>
    <property type="match status" value="1"/>
</dbReference>
<keyword id="KW-0030">Aminoacyl-tRNA synthetase</keyword>
<keyword id="KW-0067">ATP-binding</keyword>
<keyword id="KW-0963">Cytoplasm</keyword>
<keyword id="KW-0436">Ligase</keyword>
<keyword id="KW-0547">Nucleotide-binding</keyword>
<keyword id="KW-0648">Protein biosynthesis</keyword>
<keyword id="KW-1185">Reference proteome</keyword>
<keyword id="KW-0694">RNA-binding</keyword>